<name>DAPB_HELAH</name>
<reference key="1">
    <citation type="journal article" date="2006" name="PLoS Genet.">
        <title>Who ate whom? Adaptive Helicobacter genomic changes that accompanied a host jump from early humans to large felines.</title>
        <authorList>
            <person name="Eppinger M."/>
            <person name="Baar C."/>
            <person name="Linz B."/>
            <person name="Raddatz G."/>
            <person name="Lanz C."/>
            <person name="Keller H."/>
            <person name="Morelli G."/>
            <person name="Gressmann H."/>
            <person name="Achtman M."/>
            <person name="Schuster S.C."/>
        </authorList>
    </citation>
    <scope>NUCLEOTIDE SEQUENCE [LARGE SCALE GENOMIC DNA]</scope>
    <source>
        <strain>Sheeba</strain>
    </source>
</reference>
<proteinExistence type="inferred from homology"/>
<keyword id="KW-0028">Amino-acid biosynthesis</keyword>
<keyword id="KW-0963">Cytoplasm</keyword>
<keyword id="KW-0220">Diaminopimelate biosynthesis</keyword>
<keyword id="KW-0457">Lysine biosynthesis</keyword>
<keyword id="KW-0520">NAD</keyword>
<keyword id="KW-0521">NADP</keyword>
<keyword id="KW-0560">Oxidoreductase</keyword>
<comment type="function">
    <text evidence="1">Catalyzes the conversion of 4-hydroxy-tetrahydrodipicolinate (HTPA) to tetrahydrodipicolinate.</text>
</comment>
<comment type="catalytic activity">
    <reaction evidence="1">
        <text>(S)-2,3,4,5-tetrahydrodipicolinate + NAD(+) + H2O = (2S,4S)-4-hydroxy-2,3,4,5-tetrahydrodipicolinate + NADH + H(+)</text>
        <dbReference type="Rhea" id="RHEA:35323"/>
        <dbReference type="ChEBI" id="CHEBI:15377"/>
        <dbReference type="ChEBI" id="CHEBI:15378"/>
        <dbReference type="ChEBI" id="CHEBI:16845"/>
        <dbReference type="ChEBI" id="CHEBI:57540"/>
        <dbReference type="ChEBI" id="CHEBI:57945"/>
        <dbReference type="ChEBI" id="CHEBI:67139"/>
        <dbReference type="EC" id="1.17.1.8"/>
    </reaction>
</comment>
<comment type="catalytic activity">
    <reaction evidence="1">
        <text>(S)-2,3,4,5-tetrahydrodipicolinate + NADP(+) + H2O = (2S,4S)-4-hydroxy-2,3,4,5-tetrahydrodipicolinate + NADPH + H(+)</text>
        <dbReference type="Rhea" id="RHEA:35331"/>
        <dbReference type="ChEBI" id="CHEBI:15377"/>
        <dbReference type="ChEBI" id="CHEBI:15378"/>
        <dbReference type="ChEBI" id="CHEBI:16845"/>
        <dbReference type="ChEBI" id="CHEBI:57783"/>
        <dbReference type="ChEBI" id="CHEBI:58349"/>
        <dbReference type="ChEBI" id="CHEBI:67139"/>
        <dbReference type="EC" id="1.17.1.8"/>
    </reaction>
</comment>
<comment type="pathway">
    <text evidence="1">Amino-acid biosynthesis; L-lysine biosynthesis via DAP pathway; (S)-tetrahydrodipicolinate from L-aspartate: step 4/4.</text>
</comment>
<comment type="subcellular location">
    <subcellularLocation>
        <location evidence="1">Cytoplasm</location>
    </subcellularLocation>
</comment>
<comment type="similarity">
    <text evidence="1">Belongs to the DapB family.</text>
</comment>
<comment type="caution">
    <text evidence="2">Was originally thought to be a dihydrodipicolinate reductase (DHDPR), catalyzing the conversion of dihydrodipicolinate to tetrahydrodipicolinate. However, it was shown in E.coli that the substrate of the enzymatic reaction is not dihydrodipicolinate (DHDP) but in fact (2S,4S)-4-hydroxy-2,3,4,5-tetrahydrodipicolinic acid (HTPA), the product released by the DapA-catalyzed reaction.</text>
</comment>
<protein>
    <recommendedName>
        <fullName evidence="1">4-hydroxy-tetrahydrodipicolinate reductase</fullName>
        <shortName evidence="1">HTPA reductase</shortName>
        <ecNumber evidence="1">1.17.1.8</ecNumber>
    </recommendedName>
</protein>
<dbReference type="EC" id="1.17.1.8" evidence="1"/>
<dbReference type="EMBL" id="AM260522">
    <property type="protein sequence ID" value="CAJ99675.1"/>
    <property type="molecule type" value="Genomic_DNA"/>
</dbReference>
<dbReference type="RefSeq" id="WP_011577787.1">
    <property type="nucleotide sequence ID" value="NC_008229.1"/>
</dbReference>
<dbReference type="SMR" id="Q17XF1"/>
<dbReference type="STRING" id="382638.Hac_0897"/>
<dbReference type="GeneID" id="31758298"/>
<dbReference type="KEGG" id="hac:Hac_0897"/>
<dbReference type="eggNOG" id="COG0289">
    <property type="taxonomic scope" value="Bacteria"/>
</dbReference>
<dbReference type="HOGENOM" id="CLU_047479_2_1_7"/>
<dbReference type="OrthoDB" id="9790352at2"/>
<dbReference type="BioCyc" id="HACI382638:HAC_RS03855-MONOMER"/>
<dbReference type="UniPathway" id="UPA00034">
    <property type="reaction ID" value="UER00018"/>
</dbReference>
<dbReference type="Proteomes" id="UP000000775">
    <property type="component" value="Chromosome"/>
</dbReference>
<dbReference type="GO" id="GO:0005829">
    <property type="term" value="C:cytosol"/>
    <property type="evidence" value="ECO:0007669"/>
    <property type="project" value="TreeGrafter"/>
</dbReference>
<dbReference type="GO" id="GO:0008839">
    <property type="term" value="F:4-hydroxy-tetrahydrodipicolinate reductase"/>
    <property type="evidence" value="ECO:0007669"/>
    <property type="project" value="UniProtKB-EC"/>
</dbReference>
<dbReference type="GO" id="GO:0051287">
    <property type="term" value="F:NAD binding"/>
    <property type="evidence" value="ECO:0007669"/>
    <property type="project" value="UniProtKB-UniRule"/>
</dbReference>
<dbReference type="GO" id="GO:0050661">
    <property type="term" value="F:NADP binding"/>
    <property type="evidence" value="ECO:0007669"/>
    <property type="project" value="UniProtKB-UniRule"/>
</dbReference>
<dbReference type="GO" id="GO:0016726">
    <property type="term" value="F:oxidoreductase activity, acting on CH or CH2 groups, NAD or NADP as acceptor"/>
    <property type="evidence" value="ECO:0007669"/>
    <property type="project" value="UniProtKB-UniRule"/>
</dbReference>
<dbReference type="GO" id="GO:0019877">
    <property type="term" value="P:diaminopimelate biosynthetic process"/>
    <property type="evidence" value="ECO:0007669"/>
    <property type="project" value="UniProtKB-UniRule"/>
</dbReference>
<dbReference type="GO" id="GO:0009089">
    <property type="term" value="P:lysine biosynthetic process via diaminopimelate"/>
    <property type="evidence" value="ECO:0007669"/>
    <property type="project" value="UniProtKB-UniRule"/>
</dbReference>
<dbReference type="CDD" id="cd02274">
    <property type="entry name" value="DHDPR_N"/>
    <property type="match status" value="1"/>
</dbReference>
<dbReference type="Gene3D" id="3.30.360.10">
    <property type="entry name" value="Dihydrodipicolinate Reductase, domain 2"/>
    <property type="match status" value="1"/>
</dbReference>
<dbReference type="Gene3D" id="3.40.50.720">
    <property type="entry name" value="NAD(P)-binding Rossmann-like Domain"/>
    <property type="match status" value="1"/>
</dbReference>
<dbReference type="HAMAP" id="MF_00102">
    <property type="entry name" value="DapB"/>
    <property type="match status" value="1"/>
</dbReference>
<dbReference type="InterPro" id="IPR022663">
    <property type="entry name" value="DapB_C"/>
</dbReference>
<dbReference type="InterPro" id="IPR000846">
    <property type="entry name" value="DapB_N"/>
</dbReference>
<dbReference type="InterPro" id="IPR022664">
    <property type="entry name" value="DapB_N_CS"/>
</dbReference>
<dbReference type="InterPro" id="IPR023940">
    <property type="entry name" value="DHDPR_bac"/>
</dbReference>
<dbReference type="InterPro" id="IPR036291">
    <property type="entry name" value="NAD(P)-bd_dom_sf"/>
</dbReference>
<dbReference type="NCBIfam" id="TIGR00036">
    <property type="entry name" value="dapB"/>
    <property type="match status" value="1"/>
</dbReference>
<dbReference type="PANTHER" id="PTHR20836:SF0">
    <property type="entry name" value="4-HYDROXY-TETRAHYDRODIPICOLINATE REDUCTASE 1, CHLOROPLASTIC-RELATED"/>
    <property type="match status" value="1"/>
</dbReference>
<dbReference type="PANTHER" id="PTHR20836">
    <property type="entry name" value="DIHYDRODIPICOLINATE REDUCTASE"/>
    <property type="match status" value="1"/>
</dbReference>
<dbReference type="Pfam" id="PF05173">
    <property type="entry name" value="DapB_C"/>
    <property type="match status" value="1"/>
</dbReference>
<dbReference type="Pfam" id="PF01113">
    <property type="entry name" value="DapB_N"/>
    <property type="match status" value="1"/>
</dbReference>
<dbReference type="PIRSF" id="PIRSF000161">
    <property type="entry name" value="DHPR"/>
    <property type="match status" value="1"/>
</dbReference>
<dbReference type="SUPFAM" id="SSF55347">
    <property type="entry name" value="Glyceraldehyde-3-phosphate dehydrogenase-like, C-terminal domain"/>
    <property type="match status" value="1"/>
</dbReference>
<dbReference type="SUPFAM" id="SSF51735">
    <property type="entry name" value="NAD(P)-binding Rossmann-fold domains"/>
    <property type="match status" value="1"/>
</dbReference>
<dbReference type="PROSITE" id="PS01298">
    <property type="entry name" value="DAPB"/>
    <property type="match status" value="1"/>
</dbReference>
<feature type="chain" id="PRO_1000008572" description="4-hydroxy-tetrahydrodipicolinate reductase">
    <location>
        <begin position="1"/>
        <end position="254"/>
    </location>
</feature>
<feature type="active site" description="Proton donor/acceptor" evidence="1">
    <location>
        <position position="147"/>
    </location>
</feature>
<feature type="active site" description="Proton donor" evidence="1">
    <location>
        <position position="151"/>
    </location>
</feature>
<feature type="binding site" evidence="1">
    <location>
        <begin position="7"/>
        <end position="12"/>
    </location>
    <ligand>
        <name>NAD(+)</name>
        <dbReference type="ChEBI" id="CHEBI:57540"/>
    </ligand>
</feature>
<feature type="binding site" evidence="1">
    <location>
        <position position="35"/>
    </location>
    <ligand>
        <name>NADP(+)</name>
        <dbReference type="ChEBI" id="CHEBI:58349"/>
    </ligand>
</feature>
<feature type="binding site" evidence="1">
    <location>
        <begin position="91"/>
        <end position="93"/>
    </location>
    <ligand>
        <name>NAD(+)</name>
        <dbReference type="ChEBI" id="CHEBI:57540"/>
    </ligand>
</feature>
<feature type="binding site" evidence="1">
    <location>
        <begin position="115"/>
        <end position="118"/>
    </location>
    <ligand>
        <name>NAD(+)</name>
        <dbReference type="ChEBI" id="CHEBI:57540"/>
    </ligand>
</feature>
<feature type="binding site" evidence="1">
    <location>
        <position position="148"/>
    </location>
    <ligand>
        <name>(S)-2,3,4,5-tetrahydrodipicolinate</name>
        <dbReference type="ChEBI" id="CHEBI:16845"/>
    </ligand>
</feature>
<feature type="binding site" evidence="1">
    <location>
        <begin position="157"/>
        <end position="158"/>
    </location>
    <ligand>
        <name>(S)-2,3,4,5-tetrahydrodipicolinate</name>
        <dbReference type="ChEBI" id="CHEBI:16845"/>
    </ligand>
</feature>
<evidence type="ECO:0000255" key="1">
    <source>
        <dbReference type="HAMAP-Rule" id="MF_00102"/>
    </source>
</evidence>
<evidence type="ECO:0000305" key="2"/>
<organism>
    <name type="scientific">Helicobacter acinonychis (strain Sheeba)</name>
    <dbReference type="NCBI Taxonomy" id="382638"/>
    <lineage>
        <taxon>Bacteria</taxon>
        <taxon>Pseudomonadati</taxon>
        <taxon>Campylobacterota</taxon>
        <taxon>Epsilonproteobacteria</taxon>
        <taxon>Campylobacterales</taxon>
        <taxon>Helicobacteraceae</taxon>
        <taxon>Helicobacter</taxon>
    </lineage>
</organism>
<accession>Q17XF1</accession>
<sequence length="254" mass="27778">MKIGVYGASGRIGKLLLEELKGGYKGLVLSSVFVRQKCEIDFSSFSHKPLVTNDLKAFVRACECVIDFSLPKGVDSLLDTLLECPKILVSGTTGLEEKTLEKMQNLALKTPLLHAHNMSIGIAILNQLAFLASLKLKDADIEIVETHHNLKKDAPSGTALSLYQTCAKARGYDEKNALTTHREGLRSKESIGVAALRGGDVAGKHTIGFYLEGEYIELSHTATNRSIFAKGALEVALWLKDKAAKKYEINEIFD</sequence>
<gene>
    <name evidence="1" type="primary">dapB</name>
    <name type="ordered locus">Hac_0897</name>
</gene>